<sequence length="319" mass="34066">MKKIAVLTSGGDAPGMNAALRAVTRMALHHGLEVMGVQRGYAGLINGELFKMDRKSVSEIINRGGTILRTARCLEFKQEEVREKAAQILKAYGVEALVVIGGDGSFMGAKLLSKLGVKTVGLPGTIDNDLSYTDYTIGFDTALNTVVDAINKLRDTSTSHERVSIVEVMGRNCGDLALYAGIAGGAEAIIVPEMPFDKDELIKTILEGRTNGKTHSIIVVAEGVGGSAELAKEIESVTGIETRATILGHIQRGGSPTADDIVLASRMGAKAVEVLLEGKTSKVIGIKENRIFDMDIDEALDIERSFDESLYEMANAINK</sequence>
<feature type="chain" id="PRO_0000111944" description="ATP-dependent 6-phosphofructokinase 1">
    <location>
        <begin position="1"/>
        <end position="319"/>
    </location>
</feature>
<feature type="active site" description="Proton acceptor" evidence="1">
    <location>
        <position position="127"/>
    </location>
</feature>
<feature type="binding site" evidence="1">
    <location>
        <position position="11"/>
    </location>
    <ligand>
        <name>ATP</name>
        <dbReference type="ChEBI" id="CHEBI:30616"/>
    </ligand>
</feature>
<feature type="binding site" evidence="1">
    <location>
        <begin position="21"/>
        <end position="25"/>
    </location>
    <ligand>
        <name>ADP</name>
        <dbReference type="ChEBI" id="CHEBI:456216"/>
        <note>allosteric activator; ligand shared between dimeric partners</note>
    </ligand>
</feature>
<feature type="binding site" evidence="1">
    <location>
        <begin position="72"/>
        <end position="73"/>
    </location>
    <ligand>
        <name>ATP</name>
        <dbReference type="ChEBI" id="CHEBI:30616"/>
    </ligand>
</feature>
<feature type="binding site" evidence="1">
    <location>
        <begin position="102"/>
        <end position="105"/>
    </location>
    <ligand>
        <name>ATP</name>
        <dbReference type="ChEBI" id="CHEBI:30616"/>
    </ligand>
</feature>
<feature type="binding site" evidence="1">
    <location>
        <position position="103"/>
    </location>
    <ligand>
        <name>Mg(2+)</name>
        <dbReference type="ChEBI" id="CHEBI:18420"/>
        <note>catalytic</note>
    </ligand>
</feature>
<feature type="binding site" description="in other chain" evidence="1">
    <location>
        <begin position="125"/>
        <end position="127"/>
    </location>
    <ligand>
        <name>substrate</name>
        <note>ligand shared between dimeric partners</note>
    </ligand>
</feature>
<feature type="binding site" description="in other chain" evidence="1">
    <location>
        <position position="154"/>
    </location>
    <ligand>
        <name>ADP</name>
        <dbReference type="ChEBI" id="CHEBI:456216"/>
        <note>allosteric activator; ligand shared between dimeric partners</note>
    </ligand>
</feature>
<feature type="binding site" evidence="1">
    <location>
        <position position="162"/>
    </location>
    <ligand>
        <name>substrate</name>
        <note>ligand shared between dimeric partners</note>
    </ligand>
</feature>
<feature type="binding site" description="in other chain" evidence="1">
    <location>
        <begin position="169"/>
        <end position="171"/>
    </location>
    <ligand>
        <name>substrate</name>
        <note>ligand shared between dimeric partners</note>
    </ligand>
</feature>
<feature type="binding site" description="in other chain" evidence="1">
    <location>
        <begin position="185"/>
        <end position="187"/>
    </location>
    <ligand>
        <name>ADP</name>
        <dbReference type="ChEBI" id="CHEBI:456216"/>
        <note>allosteric activator; ligand shared between dimeric partners</note>
    </ligand>
</feature>
<feature type="binding site" description="in other chain" evidence="1">
    <location>
        <begin position="213"/>
        <end position="215"/>
    </location>
    <ligand>
        <name>ADP</name>
        <dbReference type="ChEBI" id="CHEBI:456216"/>
        <note>allosteric activator; ligand shared between dimeric partners</note>
    </ligand>
</feature>
<feature type="binding site" description="in other chain" evidence="1">
    <location>
        <position position="222"/>
    </location>
    <ligand>
        <name>substrate</name>
        <note>ligand shared between dimeric partners</note>
    </ligand>
</feature>
<feature type="binding site" evidence="1">
    <location>
        <position position="243"/>
    </location>
    <ligand>
        <name>substrate</name>
        <note>ligand shared between dimeric partners</note>
    </ligand>
</feature>
<feature type="binding site" description="in other chain" evidence="1">
    <location>
        <begin position="249"/>
        <end position="252"/>
    </location>
    <ligand>
        <name>substrate</name>
        <note>ligand shared between dimeric partners</note>
    </ligand>
</feature>
<comment type="function">
    <text evidence="1">Catalyzes the phosphorylation of D-fructose 6-phosphate to fructose 1,6-bisphosphate by ATP, the first committing step of glycolysis.</text>
</comment>
<comment type="catalytic activity">
    <reaction evidence="1">
        <text>beta-D-fructose 6-phosphate + ATP = beta-D-fructose 1,6-bisphosphate + ADP + H(+)</text>
        <dbReference type="Rhea" id="RHEA:16109"/>
        <dbReference type="ChEBI" id="CHEBI:15378"/>
        <dbReference type="ChEBI" id="CHEBI:30616"/>
        <dbReference type="ChEBI" id="CHEBI:32966"/>
        <dbReference type="ChEBI" id="CHEBI:57634"/>
        <dbReference type="ChEBI" id="CHEBI:456216"/>
        <dbReference type="EC" id="2.7.1.11"/>
    </reaction>
</comment>
<comment type="cofactor">
    <cofactor evidence="1">
        <name>Mg(2+)</name>
        <dbReference type="ChEBI" id="CHEBI:18420"/>
    </cofactor>
</comment>
<comment type="activity regulation">
    <text evidence="1">Allosterically activated by ADP and other diphosphonucleosides, and allosterically inhibited by phosphoenolpyruvate.</text>
</comment>
<comment type="pathway">
    <text evidence="1">Carbohydrate degradation; glycolysis; D-glyceraldehyde 3-phosphate and glycerone phosphate from D-glucose: step 3/4.</text>
</comment>
<comment type="subunit">
    <text evidence="1">Homotetramer.</text>
</comment>
<comment type="subcellular location">
    <subcellularLocation>
        <location evidence="1">Cytoplasm</location>
    </subcellularLocation>
</comment>
<comment type="similarity">
    <text evidence="1">Belongs to the phosphofructokinase type A (PFKA) family. ATP-dependent PFK group I subfamily. Prokaryotic clade 'B1' sub-subfamily.</text>
</comment>
<keyword id="KW-0021">Allosteric enzyme</keyword>
<keyword id="KW-0067">ATP-binding</keyword>
<keyword id="KW-0963">Cytoplasm</keyword>
<keyword id="KW-0324">Glycolysis</keyword>
<keyword id="KW-0418">Kinase</keyword>
<keyword id="KW-0460">Magnesium</keyword>
<keyword id="KW-0479">Metal-binding</keyword>
<keyword id="KW-0547">Nucleotide-binding</keyword>
<keyword id="KW-1185">Reference proteome</keyword>
<keyword id="KW-0808">Transferase</keyword>
<name>PFKA1_CLOPE</name>
<dbReference type="EC" id="2.7.1.11" evidence="1"/>
<dbReference type="EMBL" id="BA000016">
    <property type="protein sequence ID" value="BAB80067.1"/>
    <property type="molecule type" value="Genomic_DNA"/>
</dbReference>
<dbReference type="SMR" id="Q8XNH2"/>
<dbReference type="STRING" id="195102.gene:10489617"/>
<dbReference type="KEGG" id="cpe:CPE0361"/>
<dbReference type="HOGENOM" id="CLU_020655_0_1_9"/>
<dbReference type="UniPathway" id="UPA00109">
    <property type="reaction ID" value="UER00182"/>
</dbReference>
<dbReference type="Proteomes" id="UP000000818">
    <property type="component" value="Chromosome"/>
</dbReference>
<dbReference type="GO" id="GO:0005945">
    <property type="term" value="C:6-phosphofructokinase complex"/>
    <property type="evidence" value="ECO:0007669"/>
    <property type="project" value="TreeGrafter"/>
</dbReference>
<dbReference type="GO" id="GO:0003872">
    <property type="term" value="F:6-phosphofructokinase activity"/>
    <property type="evidence" value="ECO:0007669"/>
    <property type="project" value="UniProtKB-UniRule"/>
</dbReference>
<dbReference type="GO" id="GO:0016208">
    <property type="term" value="F:AMP binding"/>
    <property type="evidence" value="ECO:0007669"/>
    <property type="project" value="TreeGrafter"/>
</dbReference>
<dbReference type="GO" id="GO:0005524">
    <property type="term" value="F:ATP binding"/>
    <property type="evidence" value="ECO:0007669"/>
    <property type="project" value="UniProtKB-KW"/>
</dbReference>
<dbReference type="GO" id="GO:0070095">
    <property type="term" value="F:fructose-6-phosphate binding"/>
    <property type="evidence" value="ECO:0007669"/>
    <property type="project" value="TreeGrafter"/>
</dbReference>
<dbReference type="GO" id="GO:0042802">
    <property type="term" value="F:identical protein binding"/>
    <property type="evidence" value="ECO:0007669"/>
    <property type="project" value="TreeGrafter"/>
</dbReference>
<dbReference type="GO" id="GO:0046872">
    <property type="term" value="F:metal ion binding"/>
    <property type="evidence" value="ECO:0007669"/>
    <property type="project" value="UniProtKB-KW"/>
</dbReference>
<dbReference type="GO" id="GO:0048029">
    <property type="term" value="F:monosaccharide binding"/>
    <property type="evidence" value="ECO:0007669"/>
    <property type="project" value="TreeGrafter"/>
</dbReference>
<dbReference type="GO" id="GO:0061621">
    <property type="term" value="P:canonical glycolysis"/>
    <property type="evidence" value="ECO:0007669"/>
    <property type="project" value="TreeGrafter"/>
</dbReference>
<dbReference type="GO" id="GO:0030388">
    <property type="term" value="P:fructose 1,6-bisphosphate metabolic process"/>
    <property type="evidence" value="ECO:0007669"/>
    <property type="project" value="TreeGrafter"/>
</dbReference>
<dbReference type="GO" id="GO:0006002">
    <property type="term" value="P:fructose 6-phosphate metabolic process"/>
    <property type="evidence" value="ECO:0007669"/>
    <property type="project" value="InterPro"/>
</dbReference>
<dbReference type="FunFam" id="3.40.50.450:FF:000001">
    <property type="entry name" value="ATP-dependent 6-phosphofructokinase"/>
    <property type="match status" value="1"/>
</dbReference>
<dbReference type="FunFam" id="3.40.50.460:FF:000002">
    <property type="entry name" value="ATP-dependent 6-phosphofructokinase"/>
    <property type="match status" value="1"/>
</dbReference>
<dbReference type="Gene3D" id="3.40.50.450">
    <property type="match status" value="1"/>
</dbReference>
<dbReference type="Gene3D" id="3.40.50.460">
    <property type="entry name" value="Phosphofructokinase domain"/>
    <property type="match status" value="1"/>
</dbReference>
<dbReference type="HAMAP" id="MF_00339">
    <property type="entry name" value="Phosphofructokinase_I_B1"/>
    <property type="match status" value="1"/>
</dbReference>
<dbReference type="InterPro" id="IPR022953">
    <property type="entry name" value="ATP_PFK"/>
</dbReference>
<dbReference type="InterPro" id="IPR012003">
    <property type="entry name" value="ATP_PFK_prok-type"/>
</dbReference>
<dbReference type="InterPro" id="IPR012828">
    <property type="entry name" value="PFKA_ATP_prok"/>
</dbReference>
<dbReference type="InterPro" id="IPR000023">
    <property type="entry name" value="Phosphofructokinase_dom"/>
</dbReference>
<dbReference type="InterPro" id="IPR035966">
    <property type="entry name" value="PKF_sf"/>
</dbReference>
<dbReference type="NCBIfam" id="TIGR02482">
    <property type="entry name" value="PFKA_ATP"/>
    <property type="match status" value="1"/>
</dbReference>
<dbReference type="NCBIfam" id="NF002872">
    <property type="entry name" value="PRK03202.1"/>
    <property type="match status" value="1"/>
</dbReference>
<dbReference type="PANTHER" id="PTHR13697:SF4">
    <property type="entry name" value="ATP-DEPENDENT 6-PHOSPHOFRUCTOKINASE"/>
    <property type="match status" value="1"/>
</dbReference>
<dbReference type="PANTHER" id="PTHR13697">
    <property type="entry name" value="PHOSPHOFRUCTOKINASE"/>
    <property type="match status" value="1"/>
</dbReference>
<dbReference type="Pfam" id="PF00365">
    <property type="entry name" value="PFK"/>
    <property type="match status" value="1"/>
</dbReference>
<dbReference type="PIRSF" id="PIRSF000532">
    <property type="entry name" value="ATP_PFK_prok"/>
    <property type="match status" value="1"/>
</dbReference>
<dbReference type="PRINTS" id="PR00476">
    <property type="entry name" value="PHFRCTKINASE"/>
</dbReference>
<dbReference type="SUPFAM" id="SSF53784">
    <property type="entry name" value="Phosphofructokinase"/>
    <property type="match status" value="1"/>
</dbReference>
<protein>
    <recommendedName>
        <fullName evidence="1">ATP-dependent 6-phosphofructokinase 1</fullName>
        <shortName evidence="1">ATP-PFK 1</shortName>
        <shortName evidence="1">Phosphofructokinase 1</shortName>
        <ecNumber evidence="1">2.7.1.11</ecNumber>
    </recommendedName>
    <alternativeName>
        <fullName evidence="1">Phosphohexokinase 1</fullName>
    </alternativeName>
</protein>
<accession>Q8XNH2</accession>
<evidence type="ECO:0000255" key="1">
    <source>
        <dbReference type="HAMAP-Rule" id="MF_00339"/>
    </source>
</evidence>
<reference key="1">
    <citation type="journal article" date="2002" name="Proc. Natl. Acad. Sci. U.S.A.">
        <title>Complete genome sequence of Clostridium perfringens, an anaerobic flesh-eater.</title>
        <authorList>
            <person name="Shimizu T."/>
            <person name="Ohtani K."/>
            <person name="Hirakawa H."/>
            <person name="Ohshima K."/>
            <person name="Yamashita A."/>
            <person name="Shiba T."/>
            <person name="Ogasawara N."/>
            <person name="Hattori M."/>
            <person name="Kuhara S."/>
            <person name="Hayashi H."/>
        </authorList>
    </citation>
    <scope>NUCLEOTIDE SEQUENCE [LARGE SCALE GENOMIC DNA]</scope>
    <source>
        <strain>13 / Type A</strain>
    </source>
</reference>
<organism>
    <name type="scientific">Clostridium perfringens (strain 13 / Type A)</name>
    <dbReference type="NCBI Taxonomy" id="195102"/>
    <lineage>
        <taxon>Bacteria</taxon>
        <taxon>Bacillati</taxon>
        <taxon>Bacillota</taxon>
        <taxon>Clostridia</taxon>
        <taxon>Eubacteriales</taxon>
        <taxon>Clostridiaceae</taxon>
        <taxon>Clostridium</taxon>
    </lineage>
</organism>
<gene>
    <name evidence="1" type="primary">pfkA1</name>
    <name type="synonym">pfk</name>
    <name type="ordered locus">CPE0361</name>
</gene>
<proteinExistence type="inferred from homology"/>